<reference key="1">
    <citation type="journal article" date="1999" name="DNA Res.">
        <title>Complete genome sequence of an aerobic hyper-thermophilic crenarchaeon, Aeropyrum pernix K1.</title>
        <authorList>
            <person name="Kawarabayasi Y."/>
            <person name="Hino Y."/>
            <person name="Horikawa H."/>
            <person name="Yamazaki S."/>
            <person name="Haikawa Y."/>
            <person name="Jin-no K."/>
            <person name="Takahashi M."/>
            <person name="Sekine M."/>
            <person name="Baba S."/>
            <person name="Ankai A."/>
            <person name="Kosugi H."/>
            <person name="Hosoyama A."/>
            <person name="Fukui S."/>
            <person name="Nagai Y."/>
            <person name="Nishijima K."/>
            <person name="Nakazawa H."/>
            <person name="Takamiya M."/>
            <person name="Masuda S."/>
            <person name="Funahashi T."/>
            <person name="Tanaka T."/>
            <person name="Kudoh Y."/>
            <person name="Yamazaki J."/>
            <person name="Kushida N."/>
            <person name="Oguchi A."/>
            <person name="Aoki K."/>
            <person name="Kubota K."/>
            <person name="Nakamura Y."/>
            <person name="Nomura N."/>
            <person name="Sako Y."/>
            <person name="Kikuchi H."/>
        </authorList>
    </citation>
    <scope>NUCLEOTIDE SEQUENCE [LARGE SCALE GENOMIC DNA]</scope>
    <source>
        <strain>ATCC 700893 / DSM 11879 / JCM 9820 / NBRC 100138 / K1</strain>
    </source>
</reference>
<reference evidence="7 8" key="2">
    <citation type="journal article" date="2009" name="J. Mol. Biol.">
        <title>Two complementary enzymes for threonylation of tRNA in crenarchaeota: crystal structure of Aeropyrum pernix threonyl-tRNA synthetase lacking a cis-editing domain.</title>
        <authorList>
            <person name="Shimizu S."/>
            <person name="Juan E.C."/>
            <person name="Sato Y."/>
            <person name="Miyashita Y."/>
            <person name="Hoque M.M."/>
            <person name="Suzuki K."/>
            <person name="Sagara T."/>
            <person name="Tsunoda M."/>
            <person name="Sekiguchi T."/>
            <person name="Dock-Bregeon A.C."/>
            <person name="Moras D."/>
            <person name="Takenaka A."/>
        </authorList>
    </citation>
    <scope>X-RAY CRYSTALLOGRAPHY (2.30 ANGSTROMS) IN COMPLEX WITH ZINC</scope>
    <scope>PROBABLE FUNCTION</scope>
    <scope>COFACTOR</scope>
    <scope>SUBUNIT</scope>
</reference>
<sequence length="471" mass="53122">MASGQDKTHIDYAYELDITVKPDSRVPVFNREFATFTGAGVPLFSLGGGPIRYALAEVLAKFHARRGYYVVETPIIASTELFKVSGHIEFYRNNMYLFDIEGHEFAVKPMNCPYHILLFLNEVAKHRSKLPLPFKVFEFGRVHRYEPSGSIYGLLRVRGFTQDDAHIIVPGGRVIDVVYDVFEEMKLVLERLFKLGVSSETFKVRLSMSDKSLIGKEFMGSKEEWEGAEEALREAASRINEKYGIDIVELEGEAAFYGPKLDFIMMVEESGVSKEWQMGTIQFDFNLPRRFRLYDVVREEFGIEEVYIIHRALLGSIERFLGVYLEHRRGRMPFTLAPIQFAVIAVKTGGEVDREIEDLASSIAKGLLDKGFRVAVKGSSKTGLSSDVRHIESTAKPAVNVFIGAKEVREKVLDVRVFDLESMKRRRLAIAYGDAADAVENLAAVAEELESPVRSLSGQAPRIPADFSFML</sequence>
<dbReference type="EC" id="6.1.1.3" evidence="2"/>
<dbReference type="EMBL" id="BA000002">
    <property type="protein sequence ID" value="BAA79787.2"/>
    <property type="molecule type" value="Genomic_DNA"/>
</dbReference>
<dbReference type="PIR" id="C72673">
    <property type="entry name" value="C72673"/>
</dbReference>
<dbReference type="RefSeq" id="WP_010865989.1">
    <property type="nucleotide sequence ID" value="NC_000854.2"/>
</dbReference>
<dbReference type="PDB" id="3A31">
    <property type="method" value="X-ray"/>
    <property type="resolution" value="2.50 A"/>
    <property type="chains" value="A=1-471"/>
</dbReference>
<dbReference type="PDB" id="3A32">
    <property type="method" value="X-ray"/>
    <property type="resolution" value="2.30 A"/>
    <property type="chains" value="A=1-471"/>
</dbReference>
<dbReference type="PDBsum" id="3A31"/>
<dbReference type="PDBsum" id="3A32"/>
<dbReference type="SMR" id="Q9YDW0"/>
<dbReference type="STRING" id="272557.APE_0809.1"/>
<dbReference type="EnsemblBacteria" id="BAA79787">
    <property type="protein sequence ID" value="BAA79787"/>
    <property type="gene ID" value="APE_0809.1"/>
</dbReference>
<dbReference type="GeneID" id="1444913"/>
<dbReference type="KEGG" id="ape:APE_0809.1"/>
<dbReference type="PATRIC" id="fig|272557.25.peg.582"/>
<dbReference type="eggNOG" id="arCOG00401">
    <property type="taxonomic scope" value="Archaea"/>
</dbReference>
<dbReference type="EvolutionaryTrace" id="Q9YDW0"/>
<dbReference type="Proteomes" id="UP000002518">
    <property type="component" value="Chromosome"/>
</dbReference>
<dbReference type="GO" id="GO:0005737">
    <property type="term" value="C:cytoplasm"/>
    <property type="evidence" value="ECO:0007669"/>
    <property type="project" value="UniProtKB-SubCell"/>
</dbReference>
<dbReference type="GO" id="GO:0005524">
    <property type="term" value="F:ATP binding"/>
    <property type="evidence" value="ECO:0007669"/>
    <property type="project" value="UniProtKB-KW"/>
</dbReference>
<dbReference type="GO" id="GO:0046872">
    <property type="term" value="F:metal ion binding"/>
    <property type="evidence" value="ECO:0007669"/>
    <property type="project" value="UniProtKB-KW"/>
</dbReference>
<dbReference type="GO" id="GO:0004829">
    <property type="term" value="F:threonine-tRNA ligase activity"/>
    <property type="evidence" value="ECO:0007669"/>
    <property type="project" value="UniProtKB-EC"/>
</dbReference>
<dbReference type="GO" id="GO:0000049">
    <property type="term" value="F:tRNA binding"/>
    <property type="evidence" value="ECO:0007669"/>
    <property type="project" value="UniProtKB-KW"/>
</dbReference>
<dbReference type="GO" id="GO:0006435">
    <property type="term" value="P:threonyl-tRNA aminoacylation"/>
    <property type="evidence" value="ECO:0007669"/>
    <property type="project" value="InterPro"/>
</dbReference>
<dbReference type="CDD" id="cd00771">
    <property type="entry name" value="ThrRS_core"/>
    <property type="match status" value="1"/>
</dbReference>
<dbReference type="FunFam" id="3.30.930.10:FF:000002">
    <property type="entry name" value="Threonine--tRNA ligase"/>
    <property type="match status" value="1"/>
</dbReference>
<dbReference type="Gene3D" id="3.40.50.800">
    <property type="entry name" value="Anticodon-binding domain"/>
    <property type="match status" value="1"/>
</dbReference>
<dbReference type="Gene3D" id="3.30.930.10">
    <property type="entry name" value="Bira Bifunctional Protein, Domain 2"/>
    <property type="match status" value="1"/>
</dbReference>
<dbReference type="InterPro" id="IPR002314">
    <property type="entry name" value="aa-tRNA-synt_IIb"/>
</dbReference>
<dbReference type="InterPro" id="IPR006195">
    <property type="entry name" value="aa-tRNA-synth_II"/>
</dbReference>
<dbReference type="InterPro" id="IPR045864">
    <property type="entry name" value="aa-tRNA-synth_II/BPL/LPL"/>
</dbReference>
<dbReference type="InterPro" id="IPR004154">
    <property type="entry name" value="Anticodon-bd"/>
</dbReference>
<dbReference type="InterPro" id="IPR036621">
    <property type="entry name" value="Anticodon-bd_dom_sf"/>
</dbReference>
<dbReference type="InterPro" id="IPR002320">
    <property type="entry name" value="Thr-tRNA-ligase_IIa"/>
</dbReference>
<dbReference type="InterPro" id="IPR033728">
    <property type="entry name" value="ThrRS_core"/>
</dbReference>
<dbReference type="PANTHER" id="PTHR11451:SF44">
    <property type="entry name" value="THREONINE--TRNA LIGASE, CHLOROPLASTIC_MITOCHONDRIAL 2"/>
    <property type="match status" value="1"/>
</dbReference>
<dbReference type="PANTHER" id="PTHR11451">
    <property type="entry name" value="THREONINE-TRNA LIGASE"/>
    <property type="match status" value="1"/>
</dbReference>
<dbReference type="Pfam" id="PF03129">
    <property type="entry name" value="HGTP_anticodon"/>
    <property type="match status" value="1"/>
</dbReference>
<dbReference type="Pfam" id="PF00587">
    <property type="entry name" value="tRNA-synt_2b"/>
    <property type="match status" value="1"/>
</dbReference>
<dbReference type="PRINTS" id="PR01047">
    <property type="entry name" value="TRNASYNTHTHR"/>
</dbReference>
<dbReference type="SUPFAM" id="SSF52954">
    <property type="entry name" value="Class II aaRS ABD-related"/>
    <property type="match status" value="1"/>
</dbReference>
<dbReference type="SUPFAM" id="SSF55681">
    <property type="entry name" value="Class II aaRS and biotin synthetases"/>
    <property type="match status" value="1"/>
</dbReference>
<dbReference type="PROSITE" id="PS50862">
    <property type="entry name" value="AA_TRNA_LIGASE_II"/>
    <property type="match status" value="1"/>
</dbReference>
<comment type="function">
    <text evidence="6">Catalyzes the attachment of threonine to tRNA(Thr) in a two-step reaction: L-threonine is first activated by ATP to form Thr-AMP and then transferred to the acceptor end of tRNA(Thr) (Probable). This protein is probably not able to deacylate mischarged L-seryl-tRNA(Thr) as it lacks the appropriate domain (PubMed:19761773).</text>
</comment>
<comment type="catalytic activity">
    <reaction evidence="2">
        <text>tRNA(Thr) + L-threonine + ATP = L-threonyl-tRNA(Thr) + AMP + diphosphate + H(+)</text>
        <dbReference type="Rhea" id="RHEA:24624"/>
        <dbReference type="Rhea" id="RHEA-COMP:9670"/>
        <dbReference type="Rhea" id="RHEA-COMP:9704"/>
        <dbReference type="ChEBI" id="CHEBI:15378"/>
        <dbReference type="ChEBI" id="CHEBI:30616"/>
        <dbReference type="ChEBI" id="CHEBI:33019"/>
        <dbReference type="ChEBI" id="CHEBI:57926"/>
        <dbReference type="ChEBI" id="CHEBI:78442"/>
        <dbReference type="ChEBI" id="CHEBI:78534"/>
        <dbReference type="ChEBI" id="CHEBI:456215"/>
        <dbReference type="EC" id="6.1.1.3"/>
    </reaction>
</comment>
<comment type="cofactor">
    <cofactor evidence="2 3">
        <name>Zn(2+)</name>
        <dbReference type="ChEBI" id="CHEBI:29105"/>
    </cofactor>
    <text evidence="2 3">Binds 1 zinc ion per subunit.</text>
</comment>
<comment type="subunit">
    <text evidence="1 3">Homodimer (PubMed:19761773). Probably interacts with its editing subunit (By similarity).</text>
</comment>
<comment type="subcellular location">
    <subcellularLocation>
        <location evidence="2 5">Cytoplasm</location>
    </subcellularLocation>
</comment>
<comment type="miscellaneous">
    <text evidence="5">There are two ThrRS in this archaeon. The first one (APE_0809.1, this entry) is most similar to bacterial ThrRS but it lacks the N-terminal editing domain. The second one (APE_0117.1, AC Q9YFY3) is most similar to archaeal ThrRS but lacks the central catalytic domain; it probably does not aminoacylate tRNA(Thr).</text>
</comment>
<comment type="similarity">
    <text evidence="2">Belongs to the class-II aminoacyl-tRNA synthetase family.</text>
</comment>
<evidence type="ECO:0000250" key="1">
    <source>
        <dbReference type="UniProtKB" id="Q97VW8"/>
    </source>
</evidence>
<evidence type="ECO:0000255" key="2">
    <source>
        <dbReference type="HAMAP-Rule" id="MF_00184"/>
    </source>
</evidence>
<evidence type="ECO:0000269" key="3">
    <source>
    </source>
</evidence>
<evidence type="ECO:0000303" key="4">
    <source>
    </source>
</evidence>
<evidence type="ECO:0000305" key="5"/>
<evidence type="ECO:0000305" key="6">
    <source>
    </source>
</evidence>
<evidence type="ECO:0007744" key="7">
    <source>
        <dbReference type="PDB" id="3A31"/>
    </source>
</evidence>
<evidence type="ECO:0007744" key="8">
    <source>
        <dbReference type="PDB" id="3A32"/>
    </source>
</evidence>
<evidence type="ECO:0007829" key="9">
    <source>
        <dbReference type="PDB" id="3A32"/>
    </source>
</evidence>
<proteinExistence type="evidence at protein level"/>
<accession>Q9YDW0</accession>
<feature type="chain" id="PRO_0000101117" description="Threonine--tRNA ligase catalytic subunit">
    <location>
        <begin position="1"/>
        <end position="471"/>
    </location>
</feature>
<feature type="region of interest" description="Catalytic" evidence="2 6">
    <location>
        <begin position="8"/>
        <end position="333"/>
    </location>
</feature>
<feature type="binding site" evidence="2 3 8">
    <location>
        <position position="112"/>
    </location>
    <ligand>
        <name>Zn(2+)</name>
        <dbReference type="ChEBI" id="CHEBI:29105"/>
    </ligand>
</feature>
<feature type="binding site" evidence="2 3 8">
    <location>
        <position position="166"/>
    </location>
    <ligand>
        <name>Zn(2+)</name>
        <dbReference type="ChEBI" id="CHEBI:29105"/>
    </ligand>
</feature>
<feature type="binding site" evidence="2 3 8">
    <location>
        <position position="310"/>
    </location>
    <ligand>
        <name>Zn(2+)</name>
        <dbReference type="ChEBI" id="CHEBI:29105"/>
    </ligand>
</feature>
<feature type="helix" evidence="9">
    <location>
        <begin position="9"/>
        <end position="15"/>
    </location>
</feature>
<feature type="turn" evidence="9">
    <location>
        <begin position="27"/>
        <end position="29"/>
    </location>
</feature>
<feature type="helix" evidence="9">
    <location>
        <begin position="34"/>
        <end position="37"/>
    </location>
</feature>
<feature type="helix" evidence="9">
    <location>
        <begin position="48"/>
        <end position="65"/>
    </location>
</feature>
<feature type="strand" evidence="9">
    <location>
        <begin position="75"/>
        <end position="78"/>
    </location>
</feature>
<feature type="helix" evidence="9">
    <location>
        <begin position="80"/>
        <end position="84"/>
    </location>
</feature>
<feature type="helix" evidence="9">
    <location>
        <begin position="91"/>
        <end position="94"/>
    </location>
</feature>
<feature type="strand" evidence="9">
    <location>
        <begin position="95"/>
        <end position="100"/>
    </location>
</feature>
<feature type="strand" evidence="9">
    <location>
        <begin position="103"/>
        <end position="107"/>
    </location>
</feature>
<feature type="helix" evidence="9">
    <location>
        <begin position="112"/>
        <end position="126"/>
    </location>
</feature>
<feature type="helix" evidence="9">
    <location>
        <begin position="127"/>
        <end position="129"/>
    </location>
</feature>
<feature type="strand" evidence="9">
    <location>
        <begin position="132"/>
        <end position="143"/>
    </location>
</feature>
<feature type="helix" evidence="9">
    <location>
        <begin position="148"/>
        <end position="150"/>
    </location>
</feature>
<feature type="turn" evidence="9">
    <location>
        <begin position="153"/>
        <end position="155"/>
    </location>
</feature>
<feature type="strand" evidence="9">
    <location>
        <begin position="158"/>
        <end position="170"/>
    </location>
</feature>
<feature type="helix" evidence="9">
    <location>
        <begin position="171"/>
        <end position="173"/>
    </location>
</feature>
<feature type="helix" evidence="9">
    <location>
        <begin position="174"/>
        <end position="191"/>
    </location>
</feature>
<feature type="turn" evidence="9">
    <location>
        <begin position="199"/>
        <end position="201"/>
    </location>
</feature>
<feature type="strand" evidence="9">
    <location>
        <begin position="202"/>
        <end position="207"/>
    </location>
</feature>
<feature type="helix" evidence="9">
    <location>
        <begin position="211"/>
        <end position="213"/>
    </location>
</feature>
<feature type="turn" evidence="9">
    <location>
        <begin position="215"/>
        <end position="217"/>
    </location>
</feature>
<feature type="helix" evidence="9">
    <location>
        <begin position="222"/>
        <end position="243"/>
    </location>
</feature>
<feature type="strand" evidence="9">
    <location>
        <begin position="246"/>
        <end position="250"/>
    </location>
</feature>
<feature type="strand" evidence="9">
    <location>
        <begin position="260"/>
        <end position="271"/>
    </location>
</feature>
<feature type="strand" evidence="9">
    <location>
        <begin position="273"/>
        <end position="286"/>
    </location>
</feature>
<feature type="helix" evidence="9">
    <location>
        <begin position="287"/>
        <end position="290"/>
    </location>
</feature>
<feature type="helix" evidence="9">
    <location>
        <begin position="293"/>
        <end position="301"/>
    </location>
</feature>
<feature type="strand" evidence="9">
    <location>
        <begin position="306"/>
        <end position="316"/>
    </location>
</feature>
<feature type="helix" evidence="9">
    <location>
        <begin position="317"/>
        <end position="327"/>
    </location>
</feature>
<feature type="turn" evidence="9">
    <location>
        <begin position="328"/>
        <end position="330"/>
    </location>
</feature>
<feature type="helix" evidence="9">
    <location>
        <begin position="334"/>
        <end position="336"/>
    </location>
</feature>
<feature type="strand" evidence="9">
    <location>
        <begin position="340"/>
        <end position="347"/>
    </location>
</feature>
<feature type="helix" evidence="9">
    <location>
        <begin position="353"/>
        <end position="369"/>
    </location>
</feature>
<feature type="strand" evidence="9">
    <location>
        <begin position="373"/>
        <end position="380"/>
    </location>
</feature>
<feature type="turn" evidence="9">
    <location>
        <begin position="381"/>
        <end position="383"/>
    </location>
</feature>
<feature type="helix" evidence="9">
    <location>
        <begin position="384"/>
        <end position="393"/>
    </location>
</feature>
<feature type="strand" evidence="9">
    <location>
        <begin position="398"/>
        <end position="403"/>
    </location>
</feature>
<feature type="helix" evidence="9">
    <location>
        <begin position="405"/>
        <end position="410"/>
    </location>
</feature>
<feature type="strand" evidence="9">
    <location>
        <begin position="412"/>
        <end position="419"/>
    </location>
</feature>
<feature type="turn" evidence="9">
    <location>
        <begin position="420"/>
        <end position="423"/>
    </location>
</feature>
<feature type="strand" evidence="9">
    <location>
        <begin position="424"/>
        <end position="431"/>
    </location>
</feature>
<feature type="helix" evidence="9">
    <location>
        <begin position="435"/>
        <end position="457"/>
    </location>
</feature>
<feature type="helix" evidence="9">
    <location>
        <begin position="468"/>
        <end position="470"/>
    </location>
</feature>
<organism>
    <name type="scientific">Aeropyrum pernix (strain ATCC 700893 / DSM 11879 / JCM 9820 / NBRC 100138 / K1)</name>
    <dbReference type="NCBI Taxonomy" id="272557"/>
    <lineage>
        <taxon>Archaea</taxon>
        <taxon>Thermoproteota</taxon>
        <taxon>Thermoprotei</taxon>
        <taxon>Desulfurococcales</taxon>
        <taxon>Desulfurococcaceae</taxon>
        <taxon>Aeropyrum</taxon>
    </lineage>
</organism>
<name>SYTC_AERPE</name>
<keyword id="KW-0002">3D-structure</keyword>
<keyword id="KW-0030">Aminoacyl-tRNA synthetase</keyword>
<keyword id="KW-0067">ATP-binding</keyword>
<keyword id="KW-0963">Cytoplasm</keyword>
<keyword id="KW-0436">Ligase</keyword>
<keyword id="KW-0479">Metal-binding</keyword>
<keyword id="KW-0547">Nucleotide-binding</keyword>
<keyword id="KW-0648">Protein biosynthesis</keyword>
<keyword id="KW-1185">Reference proteome</keyword>
<keyword id="KW-0694">RNA-binding</keyword>
<keyword id="KW-0820">tRNA-binding</keyword>
<keyword id="KW-0862">Zinc</keyword>
<protein>
    <recommendedName>
        <fullName>Threonine--tRNA ligase catalytic subunit</fullName>
        <ecNumber evidence="2">6.1.1.3</ecNumber>
    </recommendedName>
    <alternativeName>
        <fullName>Threonyl-tRNA synthetase 1</fullName>
        <shortName evidence="4">ThrRS 1</shortName>
    </alternativeName>
    <alternativeName>
        <fullName>Threonyl-tRNA synthetase catalytic subunit</fullName>
        <shortName>ThrRS-cat</shortName>
    </alternativeName>
</protein>
<gene>
    <name evidence="4" type="primary">thrS-cat</name>
    <name type="synonym">thrS1</name>
    <name type="ordered locus">APE_0809.1</name>
</gene>